<dbReference type="EMBL" id="CP000970">
    <property type="protein sequence ID" value="ACB16604.1"/>
    <property type="molecule type" value="Genomic_DNA"/>
</dbReference>
<dbReference type="RefSeq" id="WP_001288368.1">
    <property type="nucleotide sequence ID" value="NC_010498.1"/>
</dbReference>
<dbReference type="SMR" id="B1LGE9"/>
<dbReference type="GeneID" id="93775408"/>
<dbReference type="KEGG" id="ecm:EcSMS35_1843"/>
<dbReference type="HOGENOM" id="CLU_180697_1_0_6"/>
<dbReference type="Proteomes" id="UP000007011">
    <property type="component" value="Chromosome"/>
</dbReference>
<dbReference type="HAMAP" id="MF_01641">
    <property type="entry name" value="UPF0509"/>
    <property type="match status" value="1"/>
</dbReference>
<dbReference type="InterPro" id="IPR020887">
    <property type="entry name" value="UPF0509"/>
</dbReference>
<dbReference type="NCBIfam" id="NF010179">
    <property type="entry name" value="PRK13658.1"/>
    <property type="match status" value="1"/>
</dbReference>
<dbReference type="Pfam" id="PF23675">
    <property type="entry name" value="YciZ"/>
    <property type="match status" value="1"/>
</dbReference>
<protein>
    <recommendedName>
        <fullName evidence="1">UPF0509 protein YciZ</fullName>
    </recommendedName>
</protein>
<name>YCIZ_ECOSM</name>
<reference key="1">
    <citation type="journal article" date="2008" name="J. Bacteriol.">
        <title>Insights into the environmental resistance gene pool from the genome sequence of the multidrug-resistant environmental isolate Escherichia coli SMS-3-5.</title>
        <authorList>
            <person name="Fricke W.F."/>
            <person name="Wright M.S."/>
            <person name="Lindell A.H."/>
            <person name="Harkins D.M."/>
            <person name="Baker-Austin C."/>
            <person name="Ravel J."/>
            <person name="Stepanauskas R."/>
        </authorList>
    </citation>
    <scope>NUCLEOTIDE SEQUENCE [LARGE SCALE GENOMIC DNA]</scope>
    <source>
        <strain>SMS-3-5 / SECEC</strain>
    </source>
</reference>
<comment type="similarity">
    <text evidence="1">Belongs to the UPF0509 family.</text>
</comment>
<proteinExistence type="inferred from homology"/>
<evidence type="ECO:0000255" key="1">
    <source>
        <dbReference type="HAMAP-Rule" id="MF_01641"/>
    </source>
</evidence>
<organism>
    <name type="scientific">Escherichia coli (strain SMS-3-5 / SECEC)</name>
    <dbReference type="NCBI Taxonomy" id="439855"/>
    <lineage>
        <taxon>Bacteria</taxon>
        <taxon>Pseudomonadati</taxon>
        <taxon>Pseudomonadota</taxon>
        <taxon>Gammaproteobacteria</taxon>
        <taxon>Enterobacterales</taxon>
        <taxon>Enterobacteriaceae</taxon>
        <taxon>Escherichia</taxon>
    </lineage>
</organism>
<sequence>MSEFDAQRVAERIDIVLDILVAGDYHSAIHNLEILKAELLRQVAESTPDIPKAPWEI</sequence>
<gene>
    <name evidence="1" type="primary">yciZ</name>
    <name type="ordered locus">EcSMS35_1843</name>
</gene>
<feature type="chain" id="PRO_1000186848" description="UPF0509 protein YciZ">
    <location>
        <begin position="1"/>
        <end position="57"/>
    </location>
</feature>
<accession>B1LGE9</accession>